<evidence type="ECO:0000250" key="1"/>
<evidence type="ECO:0000255" key="2"/>
<evidence type="ECO:0000305" key="3"/>
<gene>
    <name type="ordered locus">Os03g0610650</name>
    <name type="ordered locus">LOC_Os03g41419</name>
    <name type="ORF">OSJNBa0034J04.19</name>
    <name type="ORF">OSJNBb0007E22.7</name>
</gene>
<keyword id="KW-0646">Protease inhibitor</keyword>
<keyword id="KW-1185">Reference proteome</keyword>
<keyword id="KW-0722">Serine protease inhibitor</keyword>
<organism>
    <name type="scientific">Oryza sativa subsp. japonica</name>
    <name type="common">Rice</name>
    <dbReference type="NCBI Taxonomy" id="39947"/>
    <lineage>
        <taxon>Eukaryota</taxon>
        <taxon>Viridiplantae</taxon>
        <taxon>Streptophyta</taxon>
        <taxon>Embryophyta</taxon>
        <taxon>Tracheophyta</taxon>
        <taxon>Spermatophyta</taxon>
        <taxon>Magnoliopsida</taxon>
        <taxon>Liliopsida</taxon>
        <taxon>Poales</taxon>
        <taxon>Poaceae</taxon>
        <taxon>BOP clade</taxon>
        <taxon>Oryzoideae</taxon>
        <taxon>Oryzeae</taxon>
        <taxon>Oryzinae</taxon>
        <taxon>Oryza</taxon>
        <taxon>Oryza sativa</taxon>
    </lineage>
</organism>
<sequence length="396" mass="42140">MAADLRVSIAHQTSFALRLAAALSSPAHPAGGAGRNVAFSPLSLHVALSLVAAGAGGATRDQLASALGGPGSAEGLHAFAEQLVQLVLADASGAGGPRVAFADGVFVDASLSLKKTFGDVAVGKYKAETHSVDFQTKAAEVASQVNSWVEKVTSGLIKEILPPGSVDHTTRLVLGNALYFKGAWTEKFDASKTKDGEFHLLDGKSVQAPFMSTSKKQYILSYDNLKVLKLPYQQGGDKRQFSMYILLPEAQDGLWSLAEKLNSEPEFLEKHIPTRQVTVGQFKLPKFKISFGFEASDLLKSLGLHLPFSSEADLTEMVDSPEGKNLFVSSVFHKSFVEVNEEGTEAAAATAAVITLRSAPIAEDFVADHPFLFLIQEDMTGVVLFVGHVVNPLLAA</sequence>
<name>SPZXA_ORYSJ</name>
<proteinExistence type="evidence at protein level"/>
<feature type="chain" id="PRO_0000334565" description="Serpin-ZXA">
    <location>
        <begin position="1"/>
        <end position="396"/>
    </location>
</feature>
<feature type="region of interest" description="RCL">
    <location>
        <begin position="343"/>
        <end position="367"/>
    </location>
</feature>
<feature type="site" description="Reactive bond" evidence="2">
    <location>
        <begin position="357"/>
        <end position="358"/>
    </location>
</feature>
<comment type="function">
    <text evidence="1">Probable serine protease inhibitor.</text>
</comment>
<comment type="domain">
    <text evidence="1">The reactive center loop (RCL) extends out from the body of the protein and directs binding to the target protease. The protease cleaves the serpin at the reactive site within the RCL, establishing a covalent linkage between the carboxyl group of the serpin reactive site and the serine hydroxyl of the protease. The resulting inactive serpin-protease complex is highly stable (By similarity).</text>
</comment>
<comment type="similarity">
    <text evidence="3">Belongs to the serpin family.</text>
</comment>
<comment type="sequence caution" evidence="3">
    <conflict type="erroneous gene model prediction">
        <sequence resource="EMBL-CDS" id="AAR87358"/>
    </conflict>
</comment>
<comment type="sequence caution" evidence="3">
    <conflict type="erroneous gene model prediction">
        <sequence resource="EMBL-CDS" id="ABF97577"/>
    </conflict>
</comment>
<reference key="1">
    <citation type="journal article" date="2005" name="Genome Res.">
        <title>Sequence, annotation, and analysis of synteny between rice chromosome 3 and diverged grass species.</title>
        <authorList>
            <consortium name="The rice chromosome 3 sequencing consortium"/>
            <person name="Buell C.R."/>
            <person name="Yuan Q."/>
            <person name="Ouyang S."/>
            <person name="Liu J."/>
            <person name="Zhu W."/>
            <person name="Wang A."/>
            <person name="Maiti R."/>
            <person name="Haas B."/>
            <person name="Wortman J."/>
            <person name="Pertea M."/>
            <person name="Jones K.M."/>
            <person name="Kim M."/>
            <person name="Overton L."/>
            <person name="Tsitrin T."/>
            <person name="Fadrosh D."/>
            <person name="Bera J."/>
            <person name="Weaver B."/>
            <person name="Jin S."/>
            <person name="Johri S."/>
            <person name="Reardon M."/>
            <person name="Webb K."/>
            <person name="Hill J."/>
            <person name="Moffat K."/>
            <person name="Tallon L."/>
            <person name="Van Aken S."/>
            <person name="Lewis M."/>
            <person name="Utterback T."/>
            <person name="Feldblyum T."/>
            <person name="Zismann V."/>
            <person name="Iobst S."/>
            <person name="Hsiao J."/>
            <person name="de Vazeille A.R."/>
            <person name="Salzberg S.L."/>
            <person name="White O."/>
            <person name="Fraser C.M."/>
            <person name="Yu Y."/>
            <person name="Kim H."/>
            <person name="Rambo T."/>
            <person name="Currie J."/>
            <person name="Collura K."/>
            <person name="Kernodle-Thompson S."/>
            <person name="Wei F."/>
            <person name="Kudrna K."/>
            <person name="Ammiraju J.S.S."/>
            <person name="Luo M."/>
            <person name="Goicoechea J.L."/>
            <person name="Wing R.A."/>
            <person name="Henry D."/>
            <person name="Oates R."/>
            <person name="Palmer M."/>
            <person name="Pries G."/>
            <person name="Saski C."/>
            <person name="Simmons J."/>
            <person name="Soderlund C."/>
            <person name="Nelson W."/>
            <person name="de la Bastide M."/>
            <person name="Spiegel L."/>
            <person name="Nascimento L."/>
            <person name="Huang E."/>
            <person name="Preston R."/>
            <person name="Zutavern T."/>
            <person name="Palmer L."/>
            <person name="O'Shaughnessy A."/>
            <person name="Dike S."/>
            <person name="McCombie W.R."/>
            <person name="Minx P."/>
            <person name="Cordum H."/>
            <person name="Wilson R."/>
            <person name="Jin W."/>
            <person name="Lee H.R."/>
            <person name="Jiang J."/>
            <person name="Jackson S."/>
        </authorList>
    </citation>
    <scope>NUCLEOTIDE SEQUENCE [LARGE SCALE GENOMIC DNA]</scope>
    <source>
        <strain>cv. Nipponbare</strain>
    </source>
</reference>
<reference key="2">
    <citation type="journal article" date="2005" name="Nature">
        <title>The map-based sequence of the rice genome.</title>
        <authorList>
            <consortium name="International rice genome sequencing project (IRGSP)"/>
        </authorList>
    </citation>
    <scope>NUCLEOTIDE SEQUENCE [LARGE SCALE GENOMIC DNA]</scope>
    <source>
        <strain>cv. Nipponbare</strain>
    </source>
</reference>
<reference key="3">
    <citation type="journal article" date="2013" name="Rice">
        <title>Improvement of the Oryza sativa Nipponbare reference genome using next generation sequence and optical map data.</title>
        <authorList>
            <person name="Kawahara Y."/>
            <person name="de la Bastide M."/>
            <person name="Hamilton J.P."/>
            <person name="Kanamori H."/>
            <person name="McCombie W.R."/>
            <person name="Ouyang S."/>
            <person name="Schwartz D.C."/>
            <person name="Tanaka T."/>
            <person name="Wu J."/>
            <person name="Zhou S."/>
            <person name="Childs K.L."/>
            <person name="Davidson R.M."/>
            <person name="Lin H."/>
            <person name="Quesada-Ocampo L."/>
            <person name="Vaillancourt B."/>
            <person name="Sakai H."/>
            <person name="Lee S.S."/>
            <person name="Kim J."/>
            <person name="Numa H."/>
            <person name="Itoh T."/>
            <person name="Buell C.R."/>
            <person name="Matsumoto T."/>
        </authorList>
    </citation>
    <scope>GENOME REANNOTATION</scope>
    <source>
        <strain>cv. Nipponbare</strain>
    </source>
</reference>
<reference key="4">
    <citation type="submission" date="2006-10" db="EMBL/GenBank/DDBJ databases">
        <title>Oryza sativa full length cDNA.</title>
        <authorList>
            <consortium name="The rice full-length cDNA consortium"/>
        </authorList>
    </citation>
    <scope>NUCLEOTIDE SEQUENCE [LARGE SCALE MRNA]</scope>
    <source>
        <strain>cv. Nipponbare</strain>
    </source>
</reference>
<reference key="5">
    <citation type="journal article" date="2002" name="Proc. Natl. Acad. Sci. U.S.A.">
        <title>Proteomic survey of metabolic pathways in rice.</title>
        <authorList>
            <person name="Koller A."/>
            <person name="Washburn M.P."/>
            <person name="Lange B.M."/>
            <person name="Andon N.L."/>
            <person name="Deciu C."/>
            <person name="Haynes P.A."/>
            <person name="Hays L."/>
            <person name="Schieltz D."/>
            <person name="Ulaszek R."/>
            <person name="Wei J."/>
            <person name="Wolters D."/>
            <person name="Yates J.R. III"/>
        </authorList>
    </citation>
    <scope>IDENTIFICATION BY MASS SPECTROMETRY</scope>
</reference>
<reference key="6">
    <citation type="journal article" date="2008" name="Funct. Integr. Genomics">
        <title>Serpins in plants and green algae.</title>
        <authorList>
            <person name="Roberts T.H."/>
            <person name="Hejgaard J."/>
        </authorList>
    </citation>
    <scope>GENE FAMILY</scope>
    <scope>NOMENCLATURE</scope>
</reference>
<protein>
    <recommendedName>
        <fullName>Serpin-ZXA</fullName>
    </recommendedName>
    <alternativeName>
        <fullName>OrysaZxa</fullName>
    </alternativeName>
</protein>
<dbReference type="EMBL" id="AC135500">
    <property type="protein sequence ID" value="AAR87358.1"/>
    <property type="status" value="ALT_SEQ"/>
    <property type="molecule type" value="Genomic_DNA"/>
</dbReference>
<dbReference type="EMBL" id="AC136972">
    <property type="protein sequence ID" value="AAR00595.1"/>
    <property type="molecule type" value="Genomic_DNA"/>
</dbReference>
<dbReference type="EMBL" id="DP000009">
    <property type="protein sequence ID" value="ABF97577.1"/>
    <property type="status" value="ALT_SEQ"/>
    <property type="molecule type" value="Genomic_DNA"/>
</dbReference>
<dbReference type="EMBL" id="AP014959">
    <property type="protein sequence ID" value="BAS85252.1"/>
    <property type="molecule type" value="Genomic_DNA"/>
</dbReference>
<dbReference type="EMBL" id="AK243629">
    <property type="status" value="NOT_ANNOTATED_CDS"/>
    <property type="molecule type" value="mRNA"/>
</dbReference>
<dbReference type="RefSeq" id="XP_015632921.1">
    <property type="nucleotide sequence ID" value="XM_015777435.1"/>
</dbReference>
<dbReference type="SMR" id="Q75H81"/>
<dbReference type="FunCoup" id="Q75H81">
    <property type="interactions" value="1178"/>
</dbReference>
<dbReference type="STRING" id="39947.Q75H81"/>
<dbReference type="MEROPS" id="I04.032"/>
<dbReference type="PaxDb" id="39947-Q75H81"/>
<dbReference type="EnsemblPlants" id="Os03t0610650-01">
    <property type="protein sequence ID" value="Os03t0610650-01"/>
    <property type="gene ID" value="Os03g0610650"/>
</dbReference>
<dbReference type="Gramene" id="Os03t0610650-01">
    <property type="protein sequence ID" value="Os03t0610650-01"/>
    <property type="gene ID" value="Os03g0610650"/>
</dbReference>
<dbReference type="eggNOG" id="KOG2392">
    <property type="taxonomic scope" value="Eukaryota"/>
</dbReference>
<dbReference type="HOGENOM" id="CLU_023330_4_0_1"/>
<dbReference type="InParanoid" id="Q75H81"/>
<dbReference type="OMA" id="CQVPTMY"/>
<dbReference type="OrthoDB" id="1063785at2759"/>
<dbReference type="Proteomes" id="UP000000763">
    <property type="component" value="Chromosome 3"/>
</dbReference>
<dbReference type="Proteomes" id="UP000059680">
    <property type="component" value="Chromosome 3"/>
</dbReference>
<dbReference type="GO" id="GO:0005615">
    <property type="term" value="C:extracellular space"/>
    <property type="evidence" value="ECO:0000318"/>
    <property type="project" value="GO_Central"/>
</dbReference>
<dbReference type="GO" id="GO:0004867">
    <property type="term" value="F:serine-type endopeptidase inhibitor activity"/>
    <property type="evidence" value="ECO:0007669"/>
    <property type="project" value="UniProtKB-KW"/>
</dbReference>
<dbReference type="CDD" id="cd02043">
    <property type="entry name" value="serpinP_plants"/>
    <property type="match status" value="1"/>
</dbReference>
<dbReference type="Gene3D" id="2.30.39.10">
    <property type="entry name" value="Alpha-1-antitrypsin, domain 1"/>
    <property type="match status" value="1"/>
</dbReference>
<dbReference type="Gene3D" id="3.30.497.10">
    <property type="entry name" value="Antithrombin, subunit I, domain 2"/>
    <property type="match status" value="1"/>
</dbReference>
<dbReference type="InterPro" id="IPR023795">
    <property type="entry name" value="Serpin_CS"/>
</dbReference>
<dbReference type="InterPro" id="IPR023796">
    <property type="entry name" value="Serpin_dom"/>
</dbReference>
<dbReference type="InterPro" id="IPR000215">
    <property type="entry name" value="Serpin_fam"/>
</dbReference>
<dbReference type="InterPro" id="IPR036186">
    <property type="entry name" value="Serpin_sf"/>
</dbReference>
<dbReference type="InterPro" id="IPR042178">
    <property type="entry name" value="Serpin_sf_1"/>
</dbReference>
<dbReference type="InterPro" id="IPR042185">
    <property type="entry name" value="Serpin_sf_2"/>
</dbReference>
<dbReference type="PANTHER" id="PTHR11461:SF211">
    <property type="entry name" value="GH10112P-RELATED"/>
    <property type="match status" value="1"/>
</dbReference>
<dbReference type="PANTHER" id="PTHR11461">
    <property type="entry name" value="SERINE PROTEASE INHIBITOR, SERPIN"/>
    <property type="match status" value="1"/>
</dbReference>
<dbReference type="Pfam" id="PF00079">
    <property type="entry name" value="Serpin"/>
    <property type="match status" value="1"/>
</dbReference>
<dbReference type="SMART" id="SM00093">
    <property type="entry name" value="SERPIN"/>
    <property type="match status" value="1"/>
</dbReference>
<dbReference type="SUPFAM" id="SSF56574">
    <property type="entry name" value="Serpins"/>
    <property type="match status" value="1"/>
</dbReference>
<dbReference type="PROSITE" id="PS00284">
    <property type="entry name" value="SERPIN"/>
    <property type="match status" value="1"/>
</dbReference>
<accession>Q75H81</accession>
<accession>A0A0P0W0U8</accession>
<accession>Q10GX1</accession>
<accession>Q75HM8</accession>